<keyword id="KW-0539">Nucleus</keyword>
<keyword id="KW-0597">Phosphoprotein</keyword>
<keyword id="KW-1185">Reference proteome</keyword>
<keyword id="KW-0677">Repeat</keyword>
<organism>
    <name type="scientific">Arabidopsis thaliana</name>
    <name type="common">Mouse-ear cress</name>
    <dbReference type="NCBI Taxonomy" id="3702"/>
    <lineage>
        <taxon>Eukaryota</taxon>
        <taxon>Viridiplantae</taxon>
        <taxon>Streptophyta</taxon>
        <taxon>Embryophyta</taxon>
        <taxon>Tracheophyta</taxon>
        <taxon>Spermatophyta</taxon>
        <taxon>Magnoliopsida</taxon>
        <taxon>eudicotyledons</taxon>
        <taxon>Gunneridae</taxon>
        <taxon>Pentapetalae</taxon>
        <taxon>rosids</taxon>
        <taxon>malvids</taxon>
        <taxon>Brassicales</taxon>
        <taxon>Brassicaceae</taxon>
        <taxon>Camelineae</taxon>
        <taxon>Arabidopsis</taxon>
    </lineage>
</organism>
<reference key="1">
    <citation type="journal article" date="1999" name="Nature">
        <title>Sequence and analysis of chromosome 2 of the plant Arabidopsis thaliana.</title>
        <authorList>
            <person name="Lin X."/>
            <person name="Kaul S."/>
            <person name="Rounsley S.D."/>
            <person name="Shea T.P."/>
            <person name="Benito M.-I."/>
            <person name="Town C.D."/>
            <person name="Fujii C.Y."/>
            <person name="Mason T.M."/>
            <person name="Bowman C.L."/>
            <person name="Barnstead M.E."/>
            <person name="Feldblyum T.V."/>
            <person name="Buell C.R."/>
            <person name="Ketchum K.A."/>
            <person name="Lee J.J."/>
            <person name="Ronning C.M."/>
            <person name="Koo H.L."/>
            <person name="Moffat K.S."/>
            <person name="Cronin L.A."/>
            <person name="Shen M."/>
            <person name="Pai G."/>
            <person name="Van Aken S."/>
            <person name="Umayam L."/>
            <person name="Tallon L.J."/>
            <person name="Gill J.E."/>
            <person name="Adams M.D."/>
            <person name="Carrera A.J."/>
            <person name="Creasy T.H."/>
            <person name="Goodman H.M."/>
            <person name="Somerville C.R."/>
            <person name="Copenhaver G.P."/>
            <person name="Preuss D."/>
            <person name="Nierman W.C."/>
            <person name="White O."/>
            <person name="Eisen J.A."/>
            <person name="Salzberg S.L."/>
            <person name="Fraser C.M."/>
            <person name="Venter J.C."/>
        </authorList>
    </citation>
    <scope>NUCLEOTIDE SEQUENCE [LARGE SCALE GENOMIC DNA]</scope>
    <source>
        <strain>cv. Columbia</strain>
    </source>
</reference>
<reference key="2">
    <citation type="journal article" date="2017" name="Plant J.">
        <title>Araport11: a complete reannotation of the Arabidopsis thaliana reference genome.</title>
        <authorList>
            <person name="Cheng C.Y."/>
            <person name="Krishnakumar V."/>
            <person name="Chan A.P."/>
            <person name="Thibaud-Nissen F."/>
            <person name="Schobel S."/>
            <person name="Town C.D."/>
        </authorList>
    </citation>
    <scope>GENOME REANNOTATION</scope>
    <source>
        <strain>cv. Columbia</strain>
    </source>
</reference>
<reference key="3">
    <citation type="submission" date="2004-01" db="EMBL/GenBank/DDBJ databases">
        <title>Arabidopsis ORF clones.</title>
        <authorList>
            <person name="Cheuk R."/>
            <person name="Chen H."/>
            <person name="Kim C.J."/>
            <person name="Shinn P."/>
            <person name="Ecker J.R."/>
        </authorList>
    </citation>
    <scope>NUCLEOTIDE SEQUENCE [LARGE SCALE MRNA]</scope>
</reference>
<reference key="4">
    <citation type="submission" date="2004-04" db="EMBL/GenBank/DDBJ databases">
        <title>Arabidopsis ORF clones.</title>
        <authorList>
            <person name="Kim C.J."/>
            <person name="Chen H."/>
            <person name="Cheuk R."/>
            <person name="Shinn P."/>
            <person name="Ecker J.R."/>
        </authorList>
    </citation>
    <scope>NUCLEOTIDE SEQUENCE [LARGE SCALE MRNA]</scope>
</reference>
<reference key="5">
    <citation type="journal article" date="2009" name="Plant Physiol.">
        <title>Large-scale Arabidopsis phosphoproteome profiling reveals novel chloroplast kinase substrates and phosphorylation networks.</title>
        <authorList>
            <person name="Reiland S."/>
            <person name="Messerli G."/>
            <person name="Baerenfaller K."/>
            <person name="Gerrits B."/>
            <person name="Endler A."/>
            <person name="Grossmann J."/>
            <person name="Gruissem W."/>
            <person name="Baginsky S."/>
        </authorList>
    </citation>
    <scope>PHOSPHORYLATION [LARGE SCALE ANALYSIS] AT THR-579</scope>
    <scope>IDENTIFICATION BY MASS SPECTROMETRY [LARGE SCALE ANALYSIS]</scope>
</reference>
<reference key="6">
    <citation type="journal article" date="2009" name="Plant Physiol.">
        <title>Plant SMU-1 and SMU-2 homologues regulate pre-mRNA splicing and multiple aspects of development.</title>
        <authorList>
            <person name="Chung T."/>
            <person name="Wang D."/>
            <person name="Kim C.S."/>
            <person name="Yadegari R."/>
            <person name="Larkins B.A."/>
        </authorList>
    </citation>
    <scope>FUNCTION</scope>
    <scope>DISRUPTION PHENOTYPE</scope>
    <scope>SUBCELLULAR LOCATION</scope>
    <scope>TISSUE SPECIFICITY</scope>
    <scope>INTERACTION WITH SMU1</scope>
</reference>
<comment type="function">
    <text evidence="2">Auxiliary spliceosomal protein involved in splicing of specific pre-mRNAs that affect multiple aspects of development.</text>
</comment>
<comment type="subunit">
    <text evidence="2">Component of the spliceosome. Interacts with SMU1.</text>
</comment>
<comment type="subcellular location">
    <subcellularLocation>
        <location evidence="2">Nucleus</location>
    </subcellularLocation>
</comment>
<comment type="tissue specificity">
    <text evidence="2">Highly expressed in seedlings at 7 days after germination, young flowers before anthesis and developing siliques. Expressed at lower levels in roots, expanding leaves, open flowers, dry seeds and inflorescences. Not detected in senescing leaves.</text>
</comment>
<comment type="disruption phenotype">
    <text evidence="2">No visible phenotype, but slower growth.</text>
</comment>
<comment type="similarity">
    <text evidence="3">Belongs to the RED family.</text>
</comment>
<sequence length="585" mass="66331">MKPSKSHHKEKTARRREEKLEESDNPKYRDRAKERRENQNPDYDPSELSSFHAVAPPGAVDIRAADALKISIENSKYLGGDVEHTHLVKGLDYALLNKVRSEIVKKPDGEDGDGGKTSAPKEDQRVTFRTIAAKSVYQWIVKPQTIIKSNEMFLPGRMTFVYDMEGGYTHDIPTTLYRSKADCPVPEEFVTVNVDGSVLDRIAKIMSYLRLGSSGKVLKKKKKEKDGKGKMSTIANDYDEDDNKSKIENGSSVNISDREVLPPPPPLPPGINHLDLSTKQEEPPVARTDDDDIFVGEGVDYTVPGKDVTQSPISEDMEESPRDKEKVSYFDEPAYGPVQEKVPYFAEPAYGPVQPSAGQEWQDMSAYGAMQTQGLAPGYPGEWQEYQYAEQTGYQEQYLQPGMEGYEVQPETDVLLDPQLMSQEEKDRGLGSVFKRDDQRLQQLRESDAREKDPTFVSESYSECYPGYQEYNHEIVGSDEEPDLSKMDMGGKAKGGLHRWDFETEEEWEKYNEQKEAMPKAAFQFGVKMQDGRKTRKQNRDRDQKLNNELHQINKILTRKKMEKEGGDVASLDAAEAQTPKRSKH</sequence>
<gene>
    <name type="primary">SMU2</name>
    <name type="ordered locus">At2g26460</name>
    <name type="ORF">T9J22.13</name>
</gene>
<proteinExistence type="evidence at protein level"/>
<name>SMU2_ARATH</name>
<evidence type="ECO:0000256" key="1">
    <source>
        <dbReference type="SAM" id="MobiDB-lite"/>
    </source>
</evidence>
<evidence type="ECO:0000269" key="2">
    <source>
    </source>
</evidence>
<evidence type="ECO:0000305" key="3"/>
<evidence type="ECO:0007744" key="4">
    <source>
    </source>
</evidence>
<dbReference type="EMBL" id="AC002505">
    <property type="protein sequence ID" value="AAC14495.1"/>
    <property type="molecule type" value="Genomic_DNA"/>
</dbReference>
<dbReference type="EMBL" id="CP002685">
    <property type="protein sequence ID" value="AEC07841.1"/>
    <property type="molecule type" value="Genomic_DNA"/>
</dbReference>
<dbReference type="EMBL" id="BT011249">
    <property type="protein sequence ID" value="AAR92285.1"/>
    <property type="molecule type" value="mRNA"/>
</dbReference>
<dbReference type="EMBL" id="BT012549">
    <property type="protein sequence ID" value="AAS99693.1"/>
    <property type="molecule type" value="mRNA"/>
</dbReference>
<dbReference type="PIR" id="T00979">
    <property type="entry name" value="T00979"/>
</dbReference>
<dbReference type="RefSeq" id="NP_180214.1">
    <property type="nucleotide sequence ID" value="NM_128203.2"/>
</dbReference>
<dbReference type="BioGRID" id="2539">
    <property type="interactions" value="1"/>
</dbReference>
<dbReference type="FunCoup" id="O48713">
    <property type="interactions" value="4411"/>
</dbReference>
<dbReference type="STRING" id="3702.O48713"/>
<dbReference type="iPTMnet" id="O48713"/>
<dbReference type="PaxDb" id="3702-AT2G26460.1"/>
<dbReference type="ProteomicsDB" id="234472"/>
<dbReference type="EnsemblPlants" id="AT2G26460.1">
    <property type="protein sequence ID" value="AT2G26460.1"/>
    <property type="gene ID" value="AT2G26460"/>
</dbReference>
<dbReference type="GeneID" id="817187"/>
<dbReference type="Gramene" id="AT2G26460.1">
    <property type="protein sequence ID" value="AT2G26460.1"/>
    <property type="gene ID" value="AT2G26460"/>
</dbReference>
<dbReference type="KEGG" id="ath:AT2G26460"/>
<dbReference type="Araport" id="AT2G26460"/>
<dbReference type="TAIR" id="AT2G26460">
    <property type="gene designation" value="SMU2"/>
</dbReference>
<dbReference type="eggNOG" id="KOG2498">
    <property type="taxonomic scope" value="Eukaryota"/>
</dbReference>
<dbReference type="HOGENOM" id="CLU_026814_1_0_1"/>
<dbReference type="InParanoid" id="O48713"/>
<dbReference type="OMA" id="WQQTNGY"/>
<dbReference type="OrthoDB" id="3366823at2759"/>
<dbReference type="PhylomeDB" id="O48713"/>
<dbReference type="PRO" id="PR:O48713"/>
<dbReference type="Proteomes" id="UP000006548">
    <property type="component" value="Chromosome 2"/>
</dbReference>
<dbReference type="ExpressionAtlas" id="O48713">
    <property type="expression patterns" value="baseline and differential"/>
</dbReference>
<dbReference type="GO" id="GO:0016607">
    <property type="term" value="C:nuclear speck"/>
    <property type="evidence" value="ECO:0000314"/>
    <property type="project" value="TAIR"/>
</dbReference>
<dbReference type="GO" id="GO:0005634">
    <property type="term" value="C:nucleus"/>
    <property type="evidence" value="ECO:0000314"/>
    <property type="project" value="TAIR"/>
</dbReference>
<dbReference type="GO" id="GO:0008380">
    <property type="term" value="P:RNA splicing"/>
    <property type="evidence" value="ECO:0000315"/>
    <property type="project" value="TAIR"/>
</dbReference>
<dbReference type="InterPro" id="IPR039896">
    <property type="entry name" value="Red-like"/>
</dbReference>
<dbReference type="InterPro" id="IPR012492">
    <property type="entry name" value="RED_C"/>
</dbReference>
<dbReference type="InterPro" id="IPR012916">
    <property type="entry name" value="RED_N"/>
</dbReference>
<dbReference type="PANTHER" id="PTHR12765">
    <property type="entry name" value="RED PROTEIN IK FACTOR CYTOKINE IK"/>
    <property type="match status" value="1"/>
</dbReference>
<dbReference type="Pfam" id="PF07807">
    <property type="entry name" value="RED_C"/>
    <property type="match status" value="1"/>
</dbReference>
<dbReference type="Pfam" id="PF07808">
    <property type="entry name" value="RED_N"/>
    <property type="match status" value="1"/>
</dbReference>
<accession>O48713</accession>
<feature type="chain" id="PRO_0000429842" description="Suppressor of mec-8 and unc-52 protein homolog 2">
    <location>
        <begin position="1"/>
        <end position="585"/>
    </location>
</feature>
<feature type="repeat" description="R-[ED] 1">
    <location>
        <begin position="16"/>
        <end position="17"/>
    </location>
</feature>
<feature type="repeat" description="R-[ED] 2">
    <location>
        <begin position="29"/>
        <end position="30"/>
    </location>
</feature>
<feature type="repeat" description="R-[ED] 3">
    <location>
        <begin position="36"/>
        <end position="37"/>
    </location>
</feature>
<feature type="repeat" description="R-[ED] 4">
    <location>
        <begin position="258"/>
        <end position="259"/>
    </location>
</feature>
<feature type="repeat" description="R-[ED] 5">
    <location>
        <begin position="322"/>
        <end position="323"/>
    </location>
</feature>
<feature type="repeat" description="R-[ED] 6">
    <location>
        <begin position="436"/>
        <end position="437"/>
    </location>
</feature>
<feature type="repeat" description="R-[ED] 7">
    <location>
        <begin position="445"/>
        <end position="446"/>
    </location>
</feature>
<feature type="repeat" description="R-[ED] 8">
    <location>
        <begin position="450"/>
        <end position="451"/>
    </location>
</feature>
<feature type="repeat" description="R-[ED] 9">
    <location>
        <begin position="540"/>
        <end position="541"/>
    </location>
</feature>
<feature type="repeat" description="R-[ED] 10">
    <location>
        <begin position="542"/>
        <end position="543"/>
    </location>
</feature>
<feature type="region of interest" description="Disordered" evidence="1">
    <location>
        <begin position="1"/>
        <end position="52"/>
    </location>
</feature>
<feature type="region of interest" description="Disordered" evidence="1">
    <location>
        <begin position="219"/>
        <end position="324"/>
    </location>
</feature>
<feature type="region of interest" description="Disordered" evidence="1">
    <location>
        <begin position="523"/>
        <end position="585"/>
    </location>
</feature>
<feature type="compositionally biased region" description="Basic residues" evidence="1">
    <location>
        <begin position="1"/>
        <end position="14"/>
    </location>
</feature>
<feature type="compositionally biased region" description="Basic and acidic residues" evidence="1">
    <location>
        <begin position="15"/>
        <end position="39"/>
    </location>
</feature>
<feature type="compositionally biased region" description="Basic and acidic residues" evidence="1">
    <location>
        <begin position="276"/>
        <end position="288"/>
    </location>
</feature>
<feature type="compositionally biased region" description="Basic and acidic residues" evidence="1">
    <location>
        <begin position="530"/>
        <end position="548"/>
    </location>
</feature>
<feature type="modified residue" description="Phosphothreonine" evidence="4">
    <location>
        <position position="579"/>
    </location>
</feature>
<protein>
    <recommendedName>
        <fullName>Suppressor of mec-8 and unc-52 protein homolog 2</fullName>
        <shortName>AtSMU-2</shortName>
    </recommendedName>
    <alternativeName>
        <fullName>Protein RED-like</fullName>
    </alternativeName>
    <alternativeName>
        <fullName>RNA splicing protein SMU2</fullName>
    </alternativeName>
</protein>